<proteinExistence type="inferred from homology"/>
<sequence length="197" mass="22400">MEQESLNGRYGSRVMTDEQMETLRKQIAIYAVLCDQLVFLHNSLSSVPLLSSGMNPMRGEYFDPMVASSSAHGMSTRPRWTPTTTQLQILENIYKEGSGTPNPRRIKEITMELSEHGQIMEKNVYHWFQNRRARSKRKQPPTTTITSSQADDAAVTTTEERGRCGDDSGGFESYEHILFPSPDLGIEHLLNRDKFID</sequence>
<reference key="1">
    <citation type="journal article" date="2000" name="Nature">
        <title>Sequence and analysis of chromosome 1 of the plant Arabidopsis thaliana.</title>
        <authorList>
            <person name="Theologis A."/>
            <person name="Ecker J.R."/>
            <person name="Palm C.J."/>
            <person name="Federspiel N.A."/>
            <person name="Kaul S."/>
            <person name="White O."/>
            <person name="Alonso J."/>
            <person name="Altafi H."/>
            <person name="Araujo R."/>
            <person name="Bowman C.L."/>
            <person name="Brooks S.Y."/>
            <person name="Buehler E."/>
            <person name="Chan A."/>
            <person name="Chao Q."/>
            <person name="Chen H."/>
            <person name="Cheuk R.F."/>
            <person name="Chin C.W."/>
            <person name="Chung M.K."/>
            <person name="Conn L."/>
            <person name="Conway A.B."/>
            <person name="Conway A.R."/>
            <person name="Creasy T.H."/>
            <person name="Dewar K."/>
            <person name="Dunn P."/>
            <person name="Etgu P."/>
            <person name="Feldblyum T.V."/>
            <person name="Feng J.-D."/>
            <person name="Fong B."/>
            <person name="Fujii C.Y."/>
            <person name="Gill J.E."/>
            <person name="Goldsmith A.D."/>
            <person name="Haas B."/>
            <person name="Hansen N.F."/>
            <person name="Hughes B."/>
            <person name="Huizar L."/>
            <person name="Hunter J.L."/>
            <person name="Jenkins J."/>
            <person name="Johnson-Hopson C."/>
            <person name="Khan S."/>
            <person name="Khaykin E."/>
            <person name="Kim C.J."/>
            <person name="Koo H.L."/>
            <person name="Kremenetskaia I."/>
            <person name="Kurtz D.B."/>
            <person name="Kwan A."/>
            <person name="Lam B."/>
            <person name="Langin-Hooper S."/>
            <person name="Lee A."/>
            <person name="Lee J.M."/>
            <person name="Lenz C.A."/>
            <person name="Li J.H."/>
            <person name="Li Y.-P."/>
            <person name="Lin X."/>
            <person name="Liu S.X."/>
            <person name="Liu Z.A."/>
            <person name="Luros J.S."/>
            <person name="Maiti R."/>
            <person name="Marziali A."/>
            <person name="Militscher J."/>
            <person name="Miranda M."/>
            <person name="Nguyen M."/>
            <person name="Nierman W.C."/>
            <person name="Osborne B.I."/>
            <person name="Pai G."/>
            <person name="Peterson J."/>
            <person name="Pham P.K."/>
            <person name="Rizzo M."/>
            <person name="Rooney T."/>
            <person name="Rowley D."/>
            <person name="Sakano H."/>
            <person name="Salzberg S.L."/>
            <person name="Schwartz J.R."/>
            <person name="Shinn P."/>
            <person name="Southwick A.M."/>
            <person name="Sun H."/>
            <person name="Tallon L.J."/>
            <person name="Tambunga G."/>
            <person name="Toriumi M.J."/>
            <person name="Town C.D."/>
            <person name="Utterback T."/>
            <person name="Van Aken S."/>
            <person name="Vaysberg M."/>
            <person name="Vysotskaia V.S."/>
            <person name="Walker M."/>
            <person name="Wu D."/>
            <person name="Yu G."/>
            <person name="Fraser C.M."/>
            <person name="Venter J.C."/>
            <person name="Davis R.W."/>
        </authorList>
    </citation>
    <scope>NUCLEOTIDE SEQUENCE [LARGE SCALE GENOMIC DNA]</scope>
    <source>
        <strain>cv. Columbia</strain>
    </source>
</reference>
<reference key="2">
    <citation type="journal article" date="2017" name="Plant J.">
        <title>Araport11: a complete reannotation of the Arabidopsis thaliana reference genome.</title>
        <authorList>
            <person name="Cheng C.Y."/>
            <person name="Krishnakumar V."/>
            <person name="Chan A.P."/>
            <person name="Thibaud-Nissen F."/>
            <person name="Schobel S."/>
            <person name="Town C.D."/>
        </authorList>
    </citation>
    <scope>GENOME REANNOTATION</scope>
    <source>
        <strain>cv. Columbia</strain>
    </source>
</reference>
<reference key="3">
    <citation type="journal article" date="2004" name="Development">
        <title>Expression dynamics of WOX genes mark cell fate decisions during early embryonic patterning in Arabidopsis thaliana.</title>
        <authorList>
            <person name="Haecker A."/>
            <person name="Gross-Hardt R."/>
            <person name="Geiges B."/>
            <person name="Sarkar A."/>
            <person name="Breuninger H."/>
            <person name="Herrmann M."/>
            <person name="Laux T."/>
        </authorList>
    </citation>
    <scope>IDENTIFICATION</scope>
</reference>
<dbReference type="EMBL" id="AC069251">
    <property type="protein sequence ID" value="AAF80617.1"/>
    <property type="molecule type" value="Genomic_DNA"/>
</dbReference>
<dbReference type="EMBL" id="CP002684">
    <property type="protein sequence ID" value="AEE30013.1"/>
    <property type="molecule type" value="Genomic_DNA"/>
</dbReference>
<dbReference type="PIR" id="G86339">
    <property type="entry name" value="G86339"/>
</dbReference>
<dbReference type="RefSeq" id="NP_173494.1">
    <property type="nucleotide sequence ID" value="NM_101923.1"/>
</dbReference>
<dbReference type="SMR" id="Q9LM83"/>
<dbReference type="FunCoup" id="Q9LM83">
    <property type="interactions" value="2"/>
</dbReference>
<dbReference type="STRING" id="3702.Q9LM83"/>
<dbReference type="PaxDb" id="3702-AT1G20710.1"/>
<dbReference type="EnsemblPlants" id="AT1G20710.1">
    <property type="protein sequence ID" value="AT1G20710.1"/>
    <property type="gene ID" value="AT1G20710"/>
</dbReference>
<dbReference type="GeneID" id="838661"/>
<dbReference type="Gramene" id="AT1G20710.1">
    <property type="protein sequence ID" value="AT1G20710.1"/>
    <property type="gene ID" value="AT1G20710"/>
</dbReference>
<dbReference type="KEGG" id="ath:AT1G20710"/>
<dbReference type="Araport" id="AT1G20710"/>
<dbReference type="TAIR" id="AT1G20710">
    <property type="gene designation" value="WOX10"/>
</dbReference>
<dbReference type="eggNOG" id="ENOG502QVBF">
    <property type="taxonomic scope" value="Eukaryota"/>
</dbReference>
<dbReference type="HOGENOM" id="CLU_071934_1_0_1"/>
<dbReference type="InParanoid" id="Q9LM83"/>
<dbReference type="OMA" id="QLVFLHN"/>
<dbReference type="PhylomeDB" id="Q9LM83"/>
<dbReference type="PRO" id="PR:Q9LM83"/>
<dbReference type="Proteomes" id="UP000006548">
    <property type="component" value="Chromosome 1"/>
</dbReference>
<dbReference type="ExpressionAtlas" id="Q9LM83">
    <property type="expression patterns" value="baseline and differential"/>
</dbReference>
<dbReference type="GO" id="GO:0005634">
    <property type="term" value="C:nucleus"/>
    <property type="evidence" value="ECO:0007669"/>
    <property type="project" value="UniProtKB-SubCell"/>
</dbReference>
<dbReference type="GO" id="GO:0003677">
    <property type="term" value="F:DNA binding"/>
    <property type="evidence" value="ECO:0007669"/>
    <property type="project" value="UniProtKB-KW"/>
</dbReference>
<dbReference type="GO" id="GO:0003700">
    <property type="term" value="F:DNA-binding transcription factor activity"/>
    <property type="evidence" value="ECO:0000250"/>
    <property type="project" value="TAIR"/>
</dbReference>
<dbReference type="CDD" id="cd00086">
    <property type="entry name" value="homeodomain"/>
    <property type="match status" value="1"/>
</dbReference>
<dbReference type="Gene3D" id="1.10.10.60">
    <property type="entry name" value="Homeodomain-like"/>
    <property type="match status" value="1"/>
</dbReference>
<dbReference type="InterPro" id="IPR001356">
    <property type="entry name" value="HD"/>
</dbReference>
<dbReference type="InterPro" id="IPR009057">
    <property type="entry name" value="Homeodomain-like_sf"/>
</dbReference>
<dbReference type="InterPro" id="IPR044559">
    <property type="entry name" value="WOX13-like"/>
</dbReference>
<dbReference type="PANTHER" id="PTHR46777:SF14">
    <property type="entry name" value="WUSCHEL-RELATED HOMEOBOX 10-RELATED"/>
    <property type="match status" value="1"/>
</dbReference>
<dbReference type="PANTHER" id="PTHR46777">
    <property type="entry name" value="WUSCHEL-RELATED HOMEOBOX 13"/>
    <property type="match status" value="1"/>
</dbReference>
<dbReference type="Pfam" id="PF00046">
    <property type="entry name" value="Homeodomain"/>
    <property type="match status" value="1"/>
</dbReference>
<dbReference type="SMART" id="SM00389">
    <property type="entry name" value="HOX"/>
    <property type="match status" value="1"/>
</dbReference>
<dbReference type="SUPFAM" id="SSF46689">
    <property type="entry name" value="Homeodomain-like"/>
    <property type="match status" value="1"/>
</dbReference>
<dbReference type="PROSITE" id="PS50071">
    <property type="entry name" value="HOMEOBOX_2"/>
    <property type="match status" value="1"/>
</dbReference>
<organism>
    <name type="scientific">Arabidopsis thaliana</name>
    <name type="common">Mouse-ear cress</name>
    <dbReference type="NCBI Taxonomy" id="3702"/>
    <lineage>
        <taxon>Eukaryota</taxon>
        <taxon>Viridiplantae</taxon>
        <taxon>Streptophyta</taxon>
        <taxon>Embryophyta</taxon>
        <taxon>Tracheophyta</taxon>
        <taxon>Spermatophyta</taxon>
        <taxon>Magnoliopsida</taxon>
        <taxon>eudicotyledons</taxon>
        <taxon>Gunneridae</taxon>
        <taxon>Pentapetalae</taxon>
        <taxon>rosids</taxon>
        <taxon>malvids</taxon>
        <taxon>Brassicales</taxon>
        <taxon>Brassicaceae</taxon>
        <taxon>Camelineae</taxon>
        <taxon>Arabidopsis</taxon>
    </lineage>
</organism>
<comment type="function">
    <text evidence="1">Potential transcription factor that plays a central role during developmental processes.</text>
</comment>
<comment type="subcellular location">
    <subcellularLocation>
        <location evidence="2">Nucleus</location>
    </subcellularLocation>
</comment>
<comment type="similarity">
    <text evidence="4">Belongs to the WUS homeobox family.</text>
</comment>
<name>WOX10_ARATH</name>
<protein>
    <recommendedName>
        <fullName>Putative WUSCHEL-related homeobox 10</fullName>
    </recommendedName>
</protein>
<accession>Q9LM83</accession>
<feature type="chain" id="PRO_0000049377" description="Putative WUSCHEL-related homeobox 10">
    <location>
        <begin position="1"/>
        <end position="197"/>
    </location>
</feature>
<feature type="DNA-binding region" description="Homeobox; WUS-type" evidence="2">
    <location>
        <begin position="75"/>
        <end position="139"/>
    </location>
</feature>
<feature type="region of interest" description="Disordered" evidence="3">
    <location>
        <begin position="132"/>
        <end position="168"/>
    </location>
</feature>
<feature type="compositionally biased region" description="Polar residues" evidence="3">
    <location>
        <begin position="140"/>
        <end position="150"/>
    </location>
</feature>
<gene>
    <name type="primary">WOX10</name>
    <name type="ordered locus">At1g20710</name>
    <name type="ORF">F2D10.20</name>
</gene>
<keyword id="KW-0217">Developmental protein</keyword>
<keyword id="KW-0238">DNA-binding</keyword>
<keyword id="KW-0371">Homeobox</keyword>
<keyword id="KW-0539">Nucleus</keyword>
<keyword id="KW-1185">Reference proteome</keyword>
<keyword id="KW-0804">Transcription</keyword>
<keyword id="KW-0805">Transcription regulation</keyword>
<evidence type="ECO:0000250" key="1"/>
<evidence type="ECO:0000255" key="2">
    <source>
        <dbReference type="PROSITE-ProRule" id="PRU00108"/>
    </source>
</evidence>
<evidence type="ECO:0000256" key="3">
    <source>
        <dbReference type="SAM" id="MobiDB-lite"/>
    </source>
</evidence>
<evidence type="ECO:0000305" key="4"/>